<name>CISY3_YEAST</name>
<sequence>MVQRLLPGAHICRRSFNSSAIIKSSALTLKEALENVIPKKRDAVKKLKACYGSTFVGPITISSVLGGMRGNQSMFWQGTSLDPEHGIKFQGLTIEECQNRLPNTGIDGDNFLPESMLWLLMTGGVPTFQQAASFRKELAIRGRKLPHYTEKVLSSLPKDMHPMTQLAIGLASMNKGSLFATNYQKGLIGKMEFWKDTLEDSLNLIASLPLLTGRIYSNITNEGHPLGQYSEEVDWCTNICSLLGMTNGTNSSNTCNLTSQQSLDFINLMRLYTGIHVDHEGGNVSAHTTHLVGSALSDPYLSYSSGIMGLAGPLHGLAAQEVVRFLIEMNSNISSIAREQEIKDYLWKILNSNRVIPGYGHAVLRKPDPRFTAMLEFAQKRPIEFENDKNVLLMQKLAEIAPKVLLEHGKSKNPFPNVDSASGILFYHYGIRELLFFTVIFGCSRAMGPLTQLVWDRILGLPIERPKSLNLEGLEALTKASNVNKL</sequence>
<reference key="1">
    <citation type="submission" date="1995-06" db="EMBL/GenBank/DDBJ databases">
        <authorList>
            <person name="Jia Y.K."/>
            <person name="Becam A.-M."/>
            <person name="Slonimski P.P."/>
            <person name="Herbert C.J."/>
        </authorList>
    </citation>
    <scope>NUCLEOTIDE SEQUENCE [GENOMIC DNA]</scope>
    <source>
        <strain>CW04</strain>
    </source>
</reference>
<reference key="2">
    <citation type="journal article" date="1997" name="Nature">
        <title>The nucleotide sequence of Saccharomyces cerevisiae chromosome XVI.</title>
        <authorList>
            <person name="Bussey H."/>
            <person name="Storms R.K."/>
            <person name="Ahmed A."/>
            <person name="Albermann K."/>
            <person name="Allen E."/>
            <person name="Ansorge W."/>
            <person name="Araujo R."/>
            <person name="Aparicio A."/>
            <person name="Barrell B.G."/>
            <person name="Badcock K."/>
            <person name="Benes V."/>
            <person name="Botstein D."/>
            <person name="Bowman S."/>
            <person name="Brueckner M."/>
            <person name="Carpenter J."/>
            <person name="Cherry J.M."/>
            <person name="Chung E."/>
            <person name="Churcher C.M."/>
            <person name="Coster F."/>
            <person name="Davis K."/>
            <person name="Davis R.W."/>
            <person name="Dietrich F.S."/>
            <person name="Delius H."/>
            <person name="DiPaolo T."/>
            <person name="Dubois E."/>
            <person name="Duesterhoeft A."/>
            <person name="Duncan M."/>
            <person name="Floeth M."/>
            <person name="Fortin N."/>
            <person name="Friesen J.D."/>
            <person name="Fritz C."/>
            <person name="Goffeau A."/>
            <person name="Hall J."/>
            <person name="Hebling U."/>
            <person name="Heumann K."/>
            <person name="Hilbert H."/>
            <person name="Hillier L.W."/>
            <person name="Hunicke-Smith S."/>
            <person name="Hyman R.W."/>
            <person name="Johnston M."/>
            <person name="Kalman S."/>
            <person name="Kleine K."/>
            <person name="Komp C."/>
            <person name="Kurdi O."/>
            <person name="Lashkari D."/>
            <person name="Lew H."/>
            <person name="Lin A."/>
            <person name="Lin D."/>
            <person name="Louis E.J."/>
            <person name="Marathe R."/>
            <person name="Messenguy F."/>
            <person name="Mewes H.-W."/>
            <person name="Mirtipati S."/>
            <person name="Moestl D."/>
            <person name="Mueller-Auer S."/>
            <person name="Namath A."/>
            <person name="Nentwich U."/>
            <person name="Oefner P."/>
            <person name="Pearson D."/>
            <person name="Petel F.X."/>
            <person name="Pohl T.M."/>
            <person name="Purnelle B."/>
            <person name="Rajandream M.A."/>
            <person name="Rechmann S."/>
            <person name="Rieger M."/>
            <person name="Riles L."/>
            <person name="Roberts D."/>
            <person name="Schaefer M."/>
            <person name="Scharfe M."/>
            <person name="Scherens B."/>
            <person name="Schramm S."/>
            <person name="Schroeder M."/>
            <person name="Sdicu A.-M."/>
            <person name="Tettelin H."/>
            <person name="Urrestarazu L.A."/>
            <person name="Ushinsky S."/>
            <person name="Vierendeels F."/>
            <person name="Vissers S."/>
            <person name="Voss H."/>
            <person name="Walsh S.V."/>
            <person name="Wambutt R."/>
            <person name="Wang Y."/>
            <person name="Wedler E."/>
            <person name="Wedler H."/>
            <person name="Winnett E."/>
            <person name="Zhong W.-W."/>
            <person name="Zollner A."/>
            <person name="Vo D.H."/>
            <person name="Hani J."/>
        </authorList>
    </citation>
    <scope>NUCLEOTIDE SEQUENCE [LARGE SCALE GENOMIC DNA]</scope>
    <source>
        <strain>ATCC 204508 / S288c</strain>
    </source>
</reference>
<reference key="3">
    <citation type="journal article" date="2014" name="G3 (Bethesda)">
        <title>The reference genome sequence of Saccharomyces cerevisiae: Then and now.</title>
        <authorList>
            <person name="Engel S.R."/>
            <person name="Dietrich F.S."/>
            <person name="Fisk D.G."/>
            <person name="Binkley G."/>
            <person name="Balakrishnan R."/>
            <person name="Costanzo M.C."/>
            <person name="Dwight S.S."/>
            <person name="Hitz B.C."/>
            <person name="Karra K."/>
            <person name="Nash R.S."/>
            <person name="Weng S."/>
            <person name="Wong E.D."/>
            <person name="Lloyd P."/>
            <person name="Skrzypek M.S."/>
            <person name="Miyasato S.R."/>
            <person name="Simison M."/>
            <person name="Cherry J.M."/>
        </authorList>
    </citation>
    <scope>GENOME REANNOTATION</scope>
    <source>
        <strain>ATCC 204508 / S288c</strain>
    </source>
</reference>
<reference key="4">
    <citation type="journal article" date="1997" name="Mol. Microbiol.">
        <title>The CIT3 gene of Saccharomyces cerevisiae encodes a second mitochondrial isoform of citrate synthase.</title>
        <authorList>
            <person name="Jia Y.K."/>
            <person name="Becam A.M."/>
            <person name="Herbert C.J."/>
        </authorList>
    </citation>
    <scope>FUNCTION</scope>
    <scope>SUBCELLULAR LOCATION</scope>
</reference>
<reference key="5">
    <citation type="journal article" date="2007" name="Arch. Biochem. Biophys.">
        <title>Functional comparison of citrate synthase isoforms from S. cerevisiae.</title>
        <authorList>
            <person name="Graybill E.R."/>
            <person name="Rouhier M.F."/>
            <person name="Kirby C.E."/>
            <person name="Hawes J.W."/>
        </authorList>
    </citation>
    <scope>FUNCTION</scope>
    <scope>CATALYTIC ACTIVITY</scope>
    <scope>BIOPHYSICOCHEMICAL PROPERTIES</scope>
    <scope>DISRUPTION PHENOTYPE</scope>
</reference>
<keyword id="KW-0496">Mitochondrion</keyword>
<keyword id="KW-1185">Reference proteome</keyword>
<keyword id="KW-0808">Transferase</keyword>
<keyword id="KW-0809">Transit peptide</keyword>
<keyword id="KW-0816">Tricarboxylic acid cycle</keyword>
<protein>
    <recommendedName>
        <fullName evidence="5">Citrate synthase 3, mitochondrial</fullName>
        <ecNumber evidence="3">2.3.3.1</ecNumber>
    </recommendedName>
</protein>
<organism>
    <name type="scientific">Saccharomyces cerevisiae (strain ATCC 204508 / S288c)</name>
    <name type="common">Baker's yeast</name>
    <dbReference type="NCBI Taxonomy" id="559292"/>
    <lineage>
        <taxon>Eukaryota</taxon>
        <taxon>Fungi</taxon>
        <taxon>Dikarya</taxon>
        <taxon>Ascomycota</taxon>
        <taxon>Saccharomycotina</taxon>
        <taxon>Saccharomycetes</taxon>
        <taxon>Saccharomycetales</taxon>
        <taxon>Saccharomycetaceae</taxon>
        <taxon>Saccharomyces</taxon>
    </lineage>
</organism>
<proteinExistence type="evidence at protein level"/>
<evidence type="ECO:0000255" key="1"/>
<evidence type="ECO:0000255" key="2">
    <source>
        <dbReference type="PROSITE-ProRule" id="PRU10117"/>
    </source>
</evidence>
<evidence type="ECO:0000269" key="3">
    <source>
    </source>
</evidence>
<evidence type="ECO:0000269" key="4">
    <source>
    </source>
</evidence>
<evidence type="ECO:0000303" key="5">
    <source>
    </source>
</evidence>
<evidence type="ECO:0000305" key="6"/>
<feature type="transit peptide" description="Mitochondrion" evidence="1">
    <location>
        <begin position="1"/>
        <end position="23"/>
    </location>
</feature>
<feature type="chain" id="PRO_0000169985" description="Citrate synthase 3, mitochondrial">
    <location>
        <begin position="24"/>
        <end position="486"/>
    </location>
</feature>
<feature type="short sequence motif" description="Microbody targeting signal" evidence="1">
    <location>
        <begin position="484"/>
        <end position="486"/>
    </location>
</feature>
<feature type="active site" evidence="2">
    <location>
        <position position="315"/>
    </location>
</feature>
<feature type="active site" evidence="2">
    <location>
        <position position="361"/>
    </location>
</feature>
<feature type="active site" evidence="2">
    <location>
        <position position="419"/>
    </location>
</feature>
<gene>
    <name evidence="5" type="primary">CIT3</name>
    <name type="ordered locus">YPR001W</name>
    <name type="ORF">YP9723.01</name>
</gene>
<accession>P43635</accession>
<accession>D6W412</accession>
<comment type="function">
    <text evidence="3 4">Dual specificity mitochondrial citrate and methylcitrate synthase with similar catalytic efficiency with both acetyl-CoA and propionyl-CoA.</text>
</comment>
<comment type="catalytic activity">
    <reaction evidence="3">
        <text>oxaloacetate + acetyl-CoA + H2O = citrate + CoA + H(+)</text>
        <dbReference type="Rhea" id="RHEA:16845"/>
        <dbReference type="ChEBI" id="CHEBI:15377"/>
        <dbReference type="ChEBI" id="CHEBI:15378"/>
        <dbReference type="ChEBI" id="CHEBI:16452"/>
        <dbReference type="ChEBI" id="CHEBI:16947"/>
        <dbReference type="ChEBI" id="CHEBI:57287"/>
        <dbReference type="ChEBI" id="CHEBI:57288"/>
        <dbReference type="EC" id="2.3.3.1"/>
    </reaction>
</comment>
<comment type="biophysicochemical properties">
    <kinetics>
        <KM evidence="3">1200 uM for acetyl-CoA</KM>
        <KM evidence="3">520 uM for propionyl-CoA</KM>
    </kinetics>
</comment>
<comment type="pathway">
    <text evidence="6">Carbohydrate metabolism; tricarboxylic acid cycle; isocitrate from oxaloacetate: step 1/2.</text>
</comment>
<comment type="subcellular location">
    <subcellularLocation>
        <location evidence="4">Mitochondrion</location>
    </subcellularLocation>
</comment>
<comment type="disruption phenotype">
    <text evidence="3">Leads to an accumulation of acetate and of isobutanol.</text>
</comment>
<comment type="miscellaneous">
    <text evidence="6">Citrate synthase is found in nearly all cells capable of oxidative metabolism.</text>
</comment>
<comment type="similarity">
    <text evidence="6">Belongs to the citrate synthase family.</text>
</comment>
<dbReference type="EC" id="2.3.3.1" evidence="3"/>
<dbReference type="EMBL" id="X88846">
    <property type="protein sequence ID" value="CAA61299.1"/>
    <property type="molecule type" value="Genomic_DNA"/>
</dbReference>
<dbReference type="EMBL" id="Z48951">
    <property type="protein sequence ID" value="CAA88779.1"/>
    <property type="molecule type" value="Genomic_DNA"/>
</dbReference>
<dbReference type="EMBL" id="Z71255">
    <property type="protein sequence ID" value="CAA95041.1"/>
    <property type="molecule type" value="Genomic_DNA"/>
</dbReference>
<dbReference type="EMBL" id="U31900">
    <property type="protein sequence ID" value="AAA97580.1"/>
    <property type="molecule type" value="Genomic_DNA"/>
</dbReference>
<dbReference type="EMBL" id="BK006949">
    <property type="protein sequence ID" value="DAA11428.1"/>
    <property type="molecule type" value="Genomic_DNA"/>
</dbReference>
<dbReference type="PIR" id="S52814">
    <property type="entry name" value="S52814"/>
</dbReference>
<dbReference type="RefSeq" id="NP_015325.1">
    <property type="nucleotide sequence ID" value="NM_001184098.1"/>
</dbReference>
<dbReference type="SMR" id="P43635"/>
<dbReference type="BioGRID" id="36177">
    <property type="interactions" value="83"/>
</dbReference>
<dbReference type="DIP" id="DIP-3915N"/>
<dbReference type="FunCoup" id="P43635">
    <property type="interactions" value="250"/>
</dbReference>
<dbReference type="STRING" id="4932.YPR001W"/>
<dbReference type="PaxDb" id="4932-YPR001W"/>
<dbReference type="PeptideAtlas" id="P43635"/>
<dbReference type="EnsemblFungi" id="YPR001W_mRNA">
    <property type="protein sequence ID" value="YPR001W"/>
    <property type="gene ID" value="YPR001W"/>
</dbReference>
<dbReference type="GeneID" id="856107"/>
<dbReference type="KEGG" id="sce:YPR001W"/>
<dbReference type="AGR" id="SGD:S000006205"/>
<dbReference type="SGD" id="S000006205">
    <property type="gene designation" value="CIT3"/>
</dbReference>
<dbReference type="VEuPathDB" id="FungiDB:YPR001W"/>
<dbReference type="eggNOG" id="KOG2617">
    <property type="taxonomic scope" value="Eukaryota"/>
</dbReference>
<dbReference type="GeneTree" id="ENSGT00390000006813"/>
<dbReference type="HOGENOM" id="CLU_022049_2_1_1"/>
<dbReference type="InParanoid" id="P43635"/>
<dbReference type="OMA" id="IDHGFNA"/>
<dbReference type="OrthoDB" id="8017587at2759"/>
<dbReference type="BioCyc" id="MetaCyc:YPR001W-MONOMER"/>
<dbReference type="BioCyc" id="YEAST:YPR001W-MONOMER"/>
<dbReference type="SABIO-RK" id="P43635"/>
<dbReference type="UniPathway" id="UPA00223">
    <property type="reaction ID" value="UER00717"/>
</dbReference>
<dbReference type="BioGRID-ORCS" id="856107">
    <property type="hits" value="5 hits in 10 CRISPR screens"/>
</dbReference>
<dbReference type="PRO" id="PR:P43635"/>
<dbReference type="Proteomes" id="UP000002311">
    <property type="component" value="Chromosome XVI"/>
</dbReference>
<dbReference type="RNAct" id="P43635">
    <property type="molecule type" value="protein"/>
</dbReference>
<dbReference type="GO" id="GO:0005759">
    <property type="term" value="C:mitochondrial matrix"/>
    <property type="evidence" value="ECO:0000318"/>
    <property type="project" value="GO_Central"/>
</dbReference>
<dbReference type="GO" id="GO:0005739">
    <property type="term" value="C:mitochondrion"/>
    <property type="evidence" value="ECO:0000314"/>
    <property type="project" value="SGD"/>
</dbReference>
<dbReference type="GO" id="GO:0050440">
    <property type="term" value="F:2-methylcitrate synthase activity"/>
    <property type="evidence" value="ECO:0000314"/>
    <property type="project" value="SGD"/>
</dbReference>
<dbReference type="GO" id="GO:0004108">
    <property type="term" value="F:citrate (Si)-synthase activity"/>
    <property type="evidence" value="ECO:0000314"/>
    <property type="project" value="SGD"/>
</dbReference>
<dbReference type="GO" id="GO:0005975">
    <property type="term" value="P:carbohydrate metabolic process"/>
    <property type="evidence" value="ECO:0000318"/>
    <property type="project" value="GO_Central"/>
</dbReference>
<dbReference type="GO" id="GO:0019629">
    <property type="term" value="P:propionate catabolic process, 2-methylcitrate cycle"/>
    <property type="evidence" value="ECO:0000316"/>
    <property type="project" value="SGD"/>
</dbReference>
<dbReference type="GO" id="GO:0006099">
    <property type="term" value="P:tricarboxylic acid cycle"/>
    <property type="evidence" value="ECO:0000314"/>
    <property type="project" value="SGD"/>
</dbReference>
<dbReference type="CDD" id="cd06106">
    <property type="entry name" value="ScCit3_like"/>
    <property type="match status" value="1"/>
</dbReference>
<dbReference type="Gene3D" id="1.10.580.10">
    <property type="entry name" value="Citrate Synthase, domain 1"/>
    <property type="match status" value="1"/>
</dbReference>
<dbReference type="Gene3D" id="1.10.230.10">
    <property type="entry name" value="Cytochrome P450-Terp, domain 2"/>
    <property type="match status" value="1"/>
</dbReference>
<dbReference type="InterPro" id="IPR016142">
    <property type="entry name" value="Citrate_synth-like_lrg_a-sub"/>
</dbReference>
<dbReference type="InterPro" id="IPR016143">
    <property type="entry name" value="Citrate_synth-like_sm_a-sub"/>
</dbReference>
<dbReference type="InterPro" id="IPR002020">
    <property type="entry name" value="Citrate_synthase"/>
</dbReference>
<dbReference type="InterPro" id="IPR019810">
    <property type="entry name" value="Citrate_synthase_AS"/>
</dbReference>
<dbReference type="InterPro" id="IPR036969">
    <property type="entry name" value="Citrate_synthase_sf"/>
</dbReference>
<dbReference type="NCBIfam" id="NF007128">
    <property type="entry name" value="PRK09569.1"/>
    <property type="match status" value="1"/>
</dbReference>
<dbReference type="PANTHER" id="PTHR11739">
    <property type="entry name" value="CITRATE SYNTHASE"/>
    <property type="match status" value="1"/>
</dbReference>
<dbReference type="PANTHER" id="PTHR11739:SF15">
    <property type="entry name" value="CITRATE SYNTHASE 3, MITOCHONDRIAL"/>
    <property type="match status" value="1"/>
</dbReference>
<dbReference type="Pfam" id="PF00285">
    <property type="entry name" value="Citrate_synt"/>
    <property type="match status" value="1"/>
</dbReference>
<dbReference type="PRINTS" id="PR00143">
    <property type="entry name" value="CITRTSNTHASE"/>
</dbReference>
<dbReference type="SUPFAM" id="SSF48256">
    <property type="entry name" value="Citrate synthase"/>
    <property type="match status" value="1"/>
</dbReference>
<dbReference type="PROSITE" id="PS00480">
    <property type="entry name" value="CITRATE_SYNTHASE"/>
    <property type="match status" value="1"/>
</dbReference>